<protein>
    <recommendedName>
        <fullName>Profilin-1</fullName>
    </recommendedName>
    <alternativeName>
        <fullName>Profilin I</fullName>
    </alternativeName>
</protein>
<dbReference type="EMBL" id="BT021078">
    <property type="protein sequence ID" value="AAX09095.1"/>
    <property type="molecule type" value="mRNA"/>
</dbReference>
<dbReference type="EMBL" id="BC102240">
    <property type="protein sequence ID" value="AAI02241.1"/>
    <property type="molecule type" value="mRNA"/>
</dbReference>
<dbReference type="PIR" id="S00308">
    <property type="entry name" value="FABO"/>
</dbReference>
<dbReference type="RefSeq" id="NP_001015592.1">
    <property type="nucleotide sequence ID" value="NM_001015592.1"/>
</dbReference>
<dbReference type="PDB" id="1HLU">
    <property type="method" value="X-ray"/>
    <property type="resolution" value="2.65 A"/>
    <property type="chains" value="P=2-140"/>
</dbReference>
<dbReference type="PDB" id="1PNE">
    <property type="method" value="X-ray"/>
    <property type="resolution" value="2.00 A"/>
    <property type="chains" value="A=2-140"/>
</dbReference>
<dbReference type="PDB" id="2BTF">
    <property type="method" value="X-ray"/>
    <property type="resolution" value="2.55 A"/>
    <property type="chains" value="P=2-140"/>
</dbReference>
<dbReference type="PDB" id="3U4L">
    <property type="method" value="X-ray"/>
    <property type="resolution" value="2.40 A"/>
    <property type="chains" value="P=2-140"/>
</dbReference>
<dbReference type="PDB" id="3UB5">
    <property type="method" value="X-ray"/>
    <property type="resolution" value="2.20 A"/>
    <property type="chains" value="P=2-140"/>
</dbReference>
<dbReference type="PDBsum" id="1HLU"/>
<dbReference type="PDBsum" id="1PNE"/>
<dbReference type="PDBsum" id="2BTF"/>
<dbReference type="PDBsum" id="3U4L"/>
<dbReference type="PDBsum" id="3UB5"/>
<dbReference type="SMR" id="P02584"/>
<dbReference type="BioGRID" id="170522">
    <property type="interactions" value="2"/>
</dbReference>
<dbReference type="DIP" id="DIP-17037N"/>
<dbReference type="FunCoup" id="P02584">
    <property type="interactions" value="1346"/>
</dbReference>
<dbReference type="IntAct" id="P02584">
    <property type="interactions" value="2"/>
</dbReference>
<dbReference type="STRING" id="9913.ENSBTAP00000006465"/>
<dbReference type="iPTMnet" id="P02584"/>
<dbReference type="SwissPalm" id="P02584"/>
<dbReference type="PaxDb" id="9913-ENSBTAP00000006465"/>
<dbReference type="PeptideAtlas" id="P02584"/>
<dbReference type="Ensembl" id="ENSBTAT00000006465.5">
    <property type="protein sequence ID" value="ENSBTAP00000006465.4"/>
    <property type="gene ID" value="ENSBTAG00000004915.5"/>
</dbReference>
<dbReference type="GeneID" id="513895"/>
<dbReference type="KEGG" id="bta:513895"/>
<dbReference type="CTD" id="5216"/>
<dbReference type="VEuPathDB" id="HostDB:ENSBTAG00000004915"/>
<dbReference type="eggNOG" id="KOG1755">
    <property type="taxonomic scope" value="Eukaryota"/>
</dbReference>
<dbReference type="GeneTree" id="ENSGT00940000153664"/>
<dbReference type="HOGENOM" id="CLU_123405_1_0_1"/>
<dbReference type="InParanoid" id="P02584"/>
<dbReference type="OMA" id="NIAVCMT"/>
<dbReference type="OrthoDB" id="421374at2759"/>
<dbReference type="TreeFam" id="TF331744"/>
<dbReference type="Reactome" id="R-BTA-4086400">
    <property type="pathway name" value="PCP/CE pathway"/>
</dbReference>
<dbReference type="Reactome" id="R-BTA-5663220">
    <property type="pathway name" value="RHO GTPases Activate Formins"/>
</dbReference>
<dbReference type="EvolutionaryTrace" id="P02584"/>
<dbReference type="Proteomes" id="UP000009136">
    <property type="component" value="Chromosome 19"/>
</dbReference>
<dbReference type="Bgee" id="ENSBTAG00000004915">
    <property type="expression patterns" value="Expressed in monocyte and 106 other cell types or tissues"/>
</dbReference>
<dbReference type="GO" id="GO:0005737">
    <property type="term" value="C:cytoplasm"/>
    <property type="evidence" value="ECO:0000318"/>
    <property type="project" value="GO_Central"/>
</dbReference>
<dbReference type="GO" id="GO:0005856">
    <property type="term" value="C:cytoskeleton"/>
    <property type="evidence" value="ECO:0007669"/>
    <property type="project" value="UniProtKB-SubCell"/>
</dbReference>
<dbReference type="GO" id="GO:0003779">
    <property type="term" value="F:actin binding"/>
    <property type="evidence" value="ECO:0000318"/>
    <property type="project" value="GO_Central"/>
</dbReference>
<dbReference type="GO" id="GO:0030036">
    <property type="term" value="P:actin cytoskeleton organization"/>
    <property type="evidence" value="ECO:0007669"/>
    <property type="project" value="InterPro"/>
</dbReference>
<dbReference type="GO" id="GO:0032233">
    <property type="term" value="P:positive regulation of actin filament bundle assembly"/>
    <property type="evidence" value="ECO:0000318"/>
    <property type="project" value="GO_Central"/>
</dbReference>
<dbReference type="GO" id="GO:0030833">
    <property type="term" value="P:regulation of actin filament polymerization"/>
    <property type="evidence" value="ECO:0000318"/>
    <property type="project" value="GO_Central"/>
</dbReference>
<dbReference type="CDD" id="cd00148">
    <property type="entry name" value="PROF"/>
    <property type="match status" value="1"/>
</dbReference>
<dbReference type="FunFam" id="3.30.450.30:FF:000008">
    <property type="entry name" value="Profilin"/>
    <property type="match status" value="1"/>
</dbReference>
<dbReference type="Gene3D" id="3.30.450.30">
    <property type="entry name" value="Dynein light chain 2a, cytoplasmic"/>
    <property type="match status" value="1"/>
</dbReference>
<dbReference type="InterPro" id="IPR048278">
    <property type="entry name" value="PFN"/>
</dbReference>
<dbReference type="InterPro" id="IPR005455">
    <property type="entry name" value="PFN_euk"/>
</dbReference>
<dbReference type="InterPro" id="IPR036140">
    <property type="entry name" value="PFN_sf"/>
</dbReference>
<dbReference type="InterPro" id="IPR005454">
    <property type="entry name" value="Profilin1/2/3_vertebrate"/>
</dbReference>
<dbReference type="InterPro" id="IPR027310">
    <property type="entry name" value="Profilin_CS"/>
</dbReference>
<dbReference type="PANTHER" id="PTHR13936">
    <property type="entry name" value="PROFILIN"/>
    <property type="match status" value="1"/>
</dbReference>
<dbReference type="PANTHER" id="PTHR13936:SF14">
    <property type="entry name" value="PROFILIN-1"/>
    <property type="match status" value="1"/>
</dbReference>
<dbReference type="Pfam" id="PF00235">
    <property type="entry name" value="Profilin"/>
    <property type="match status" value="1"/>
</dbReference>
<dbReference type="PRINTS" id="PR00392">
    <property type="entry name" value="PROFILIN"/>
</dbReference>
<dbReference type="PRINTS" id="PR01639">
    <property type="entry name" value="PROFILINMAML"/>
</dbReference>
<dbReference type="SMART" id="SM00392">
    <property type="entry name" value="PROF"/>
    <property type="match status" value="1"/>
</dbReference>
<dbReference type="SUPFAM" id="SSF55770">
    <property type="entry name" value="Profilin (actin-binding protein)"/>
    <property type="match status" value="1"/>
</dbReference>
<dbReference type="PROSITE" id="PS00414">
    <property type="entry name" value="PROFILIN"/>
    <property type="match status" value="1"/>
</dbReference>
<name>PROF1_BOVIN</name>
<proteinExistence type="evidence at protein level"/>
<gene>
    <name type="primary">PFN1</name>
</gene>
<feature type="initiator methionine" description="Removed" evidence="5">
    <location>
        <position position="1"/>
    </location>
</feature>
<feature type="chain" id="PRO_0000199570" description="Profilin-1">
    <location>
        <begin position="2"/>
        <end position="140"/>
    </location>
</feature>
<feature type="modified residue" description="N-acetylalanine" evidence="4 5">
    <location>
        <position position="2"/>
    </location>
</feature>
<feature type="modified residue" description="Phosphoserine" evidence="3">
    <location>
        <position position="28"/>
    </location>
</feature>
<feature type="modified residue" description="Phosphoserine" evidence="2">
    <location>
        <position position="57"/>
    </location>
</feature>
<feature type="modified residue" description="N6-acetyllysine" evidence="2">
    <location>
        <position position="108"/>
    </location>
</feature>
<feature type="modified residue" description="Phosphotyrosine" evidence="2">
    <location>
        <position position="129"/>
    </location>
</feature>
<feature type="modified residue" description="Phosphoserine; by ROCK1" evidence="2">
    <location>
        <position position="138"/>
    </location>
</feature>
<feature type="cross-link" description="Glycyl lysine isopeptide (Lys-Gly) (interchain with G-Cter in SUMO2); alternate" evidence="2">
    <location>
        <position position="54"/>
    </location>
</feature>
<feature type="cross-link" description="Glycyl lysine isopeptide (Lys-Gly) (interchain with G-Cter in ubiquitin); alternate" evidence="2">
    <location>
        <position position="54"/>
    </location>
</feature>
<feature type="helix" evidence="7">
    <location>
        <begin position="5"/>
        <end position="12"/>
    </location>
</feature>
<feature type="strand" evidence="7">
    <location>
        <begin position="15"/>
        <end position="24"/>
    </location>
</feature>
<feature type="strand" evidence="7">
    <location>
        <begin position="26"/>
        <end position="28"/>
    </location>
</feature>
<feature type="strand" evidence="7">
    <location>
        <begin position="30"/>
        <end position="34"/>
    </location>
</feature>
<feature type="helix" evidence="7">
    <location>
        <begin position="40"/>
        <end position="42"/>
    </location>
</feature>
<feature type="helix" evidence="7">
    <location>
        <begin position="45"/>
        <end position="51"/>
    </location>
</feature>
<feature type="helix" evidence="7">
    <location>
        <begin position="58"/>
        <end position="62"/>
    </location>
</feature>
<feature type="strand" evidence="7">
    <location>
        <begin position="64"/>
        <end position="66"/>
    </location>
</feature>
<feature type="strand" evidence="7">
    <location>
        <begin position="69"/>
        <end position="76"/>
    </location>
</feature>
<feature type="turn" evidence="7">
    <location>
        <begin position="81"/>
        <end position="83"/>
    </location>
</feature>
<feature type="strand" evidence="7">
    <location>
        <begin position="85"/>
        <end position="90"/>
    </location>
</feature>
<feature type="strand" evidence="7">
    <location>
        <begin position="100"/>
        <end position="105"/>
    </location>
</feature>
<feature type="strand" evidence="7">
    <location>
        <begin position="107"/>
        <end position="115"/>
    </location>
</feature>
<feature type="helix" evidence="7">
    <location>
        <begin position="121"/>
        <end position="137"/>
    </location>
</feature>
<accession>P02584</accession>
<accession>Q3ZCH4</accession>
<accession>Q5E942</accession>
<sequence length="140" mass="15057">MAGWNAYIDNLMADGTCQDAAIVGYKDSPSVWAAVPGKTFVNITPAEVGILVGKDRSSFFVNGLTLGGQKCSVIRDSLLQDGEFTMDLRTKSTGGAPTFNITVTMTAKTLVLLMGKEGVHGGMINKKCYEMASHLRRSQY</sequence>
<organism>
    <name type="scientific">Bos taurus</name>
    <name type="common">Bovine</name>
    <dbReference type="NCBI Taxonomy" id="9913"/>
    <lineage>
        <taxon>Eukaryota</taxon>
        <taxon>Metazoa</taxon>
        <taxon>Chordata</taxon>
        <taxon>Craniata</taxon>
        <taxon>Vertebrata</taxon>
        <taxon>Euteleostomi</taxon>
        <taxon>Mammalia</taxon>
        <taxon>Eutheria</taxon>
        <taxon>Laurasiatheria</taxon>
        <taxon>Artiodactyla</taxon>
        <taxon>Ruminantia</taxon>
        <taxon>Pecora</taxon>
        <taxon>Bovidae</taxon>
        <taxon>Bovinae</taxon>
        <taxon>Bos</taxon>
    </lineage>
</organism>
<evidence type="ECO:0000250" key="1"/>
<evidence type="ECO:0000250" key="2">
    <source>
        <dbReference type="UniProtKB" id="P07737"/>
    </source>
</evidence>
<evidence type="ECO:0000250" key="3">
    <source>
        <dbReference type="UniProtKB" id="P62963"/>
    </source>
</evidence>
<evidence type="ECO:0000269" key="4">
    <source>
    </source>
</evidence>
<evidence type="ECO:0000269" key="5">
    <source>
    </source>
</evidence>
<evidence type="ECO:0000305" key="6"/>
<evidence type="ECO:0007829" key="7">
    <source>
        <dbReference type="PDB" id="1PNE"/>
    </source>
</evidence>
<reference key="1">
    <citation type="journal article" date="2005" name="BMC Genomics">
        <title>Characterization of 954 bovine full-CDS cDNA sequences.</title>
        <authorList>
            <person name="Harhay G.P."/>
            <person name="Sonstegard T.S."/>
            <person name="Keele J.W."/>
            <person name="Heaton M.P."/>
            <person name="Clawson M.L."/>
            <person name="Snelling W.M."/>
            <person name="Wiedmann R.T."/>
            <person name="Van Tassell C.P."/>
            <person name="Smith T.P.L."/>
        </authorList>
    </citation>
    <scope>NUCLEOTIDE SEQUENCE [LARGE SCALE MRNA]</scope>
</reference>
<reference key="2">
    <citation type="submission" date="2005-08" db="EMBL/GenBank/DDBJ databases">
        <authorList>
            <consortium name="NIH - Mammalian Gene Collection (MGC) project"/>
        </authorList>
    </citation>
    <scope>NUCLEOTIDE SEQUENCE [LARGE SCALE MRNA]</scope>
    <source>
        <strain>Crossbred X Angus</strain>
        <tissue>Ileum</tissue>
    </source>
</reference>
<reference key="3">
    <citation type="journal article" date="1979" name="FEBS Lett.">
        <title>The amino acid sequence of profilin from calf spleen.</title>
        <authorList>
            <person name="Nystroem L.-E."/>
            <person name="Lindberg U."/>
            <person name="Kendrick-Jones J."/>
            <person name="Jakes R."/>
        </authorList>
    </citation>
    <scope>PROTEIN SEQUENCE OF 2-140</scope>
    <scope>ACETYLATION AT ALA-2</scope>
    <source>
        <tissue>Spleen</tissue>
    </source>
</reference>
<reference key="4">
    <citation type="journal article" date="1988" name="FEBS Lett.">
        <title>The primary structure of human platelet profilin: reinvestigation of the calf spleen profilin sequence.</title>
        <authorList>
            <person name="Ampe C."/>
            <person name="Markey F."/>
            <person name="Lindberg U."/>
            <person name="Vandekerckhove J."/>
        </authorList>
    </citation>
    <scope>SEQUENCE REVISION</scope>
</reference>
<reference key="5">
    <citation type="journal article" date="1993" name="Nature">
        <title>The structure of crystalline profilin-beta-actin.</title>
        <authorList>
            <person name="Schutt C.E."/>
            <person name="Myslik J.C."/>
            <person name="Rozycki M.D."/>
            <person name="Goonesekere N.C.W."/>
            <person name="Lindberg U."/>
        </authorList>
    </citation>
    <scope>X-RAY CRYSTALLOGRAPHY (2.55 ANGSTROMS) OF COMPLEX WITH BETA-ACTIN</scope>
</reference>
<reference key="6">
    <citation type="journal article" date="1996" name="J. Mol. Biol.">
        <title>The structure of an open state of beta-actin at 2.65-A resolution.</title>
        <authorList>
            <person name="Chik J.K."/>
            <person name="Lindberg U."/>
            <person name="Schutt C.E."/>
        </authorList>
    </citation>
    <scope>X-RAY CRYSTALLOGRAPHY (2.65 ANGSTROMS) OF COMPLEX WITH BETA-ACTIN</scope>
</reference>
<reference key="7">
    <citation type="journal article" date="1994" name="J. Mol. Biol.">
        <title>Crystallization and structure determination of bovine profilin at 2.0-A resolution.</title>
        <authorList>
            <person name="Cedergren-Zeppezauer E.S."/>
            <person name="Goonesekere N.C."/>
            <person name="Rozycki M.D."/>
            <person name="Myslik J.C."/>
            <person name="Dauter Z."/>
            <person name="Lindberg U."/>
            <person name="Schutt C.E."/>
        </authorList>
    </citation>
    <scope>X-RAY CRYSTALLOGRAPHY (2.0 ANGSTROMS)</scope>
</reference>
<comment type="function">
    <text evidence="2">Binds to actin and affects the structure of the cytoskeleton. At high concentrations, profilin prevents the polymerization of actin, whereas it enhances it at low concentrations. By binding to PIP2, it inhibits the formation of IP3 and DG. Inhibits androgen receptor (AR) and HTT aggregation and binding of G-actin is essential for its inhibition of AR (By similarity).</text>
</comment>
<comment type="subunit">
    <text evidence="2">Found in a complex with XPO6, Ran, ACTB and PFN1 (By similarity). Interacts with ACTB (By similarity). Interacts with VASP (By similarity). Interacts with HTT (By similarity). Interacts with SH3BGRL (By similarity). Occurs in many kinds of cells as a complex with monomeric actin in a 1:1 ratio (By similarity). Interacts with ACTMAP (By similarity).</text>
</comment>
<comment type="subcellular location">
    <subcellularLocation>
        <location>Cytoplasm</location>
        <location>Cytoskeleton</location>
    </subcellularLocation>
</comment>
<comment type="PTM">
    <text evidence="1">Phosphorylation at Ser-138 reduces its affinity for G-actin and blocks its interaction with HTT, reducing its ability to inhibit androgen receptor (AR) and HTT aggregation.</text>
</comment>
<comment type="similarity">
    <text evidence="6">Belongs to the profilin family.</text>
</comment>
<keyword id="KW-0002">3D-structure</keyword>
<keyword id="KW-0007">Acetylation</keyword>
<keyword id="KW-0009">Actin-binding</keyword>
<keyword id="KW-0963">Cytoplasm</keyword>
<keyword id="KW-0206">Cytoskeleton</keyword>
<keyword id="KW-0903">Direct protein sequencing</keyword>
<keyword id="KW-1017">Isopeptide bond</keyword>
<keyword id="KW-0597">Phosphoprotein</keyword>
<keyword id="KW-1185">Reference proteome</keyword>
<keyword id="KW-0832">Ubl conjugation</keyword>